<reference key="1">
    <citation type="submission" date="2005-11" db="EMBL/GenBank/DDBJ databases">
        <title>The complete genome sequence of Lawsonia intracellularis: the causative agent of proliferative enteropathy.</title>
        <authorList>
            <person name="Kaur K."/>
            <person name="Zhang Q."/>
            <person name="Beckler D."/>
            <person name="Munir S."/>
            <person name="Li L."/>
            <person name="Kinsley K."/>
            <person name="Herron L."/>
            <person name="Peterson A."/>
            <person name="May B."/>
            <person name="Singh S."/>
            <person name="Gebhart C."/>
            <person name="Kapur V."/>
        </authorList>
    </citation>
    <scope>NUCLEOTIDE SEQUENCE [LARGE SCALE GENOMIC DNA]</scope>
    <source>
        <strain>PHE/MN1-00</strain>
    </source>
</reference>
<accession>Q1MPW9</accession>
<organism>
    <name type="scientific">Lawsonia intracellularis (strain PHE/MN1-00)</name>
    <dbReference type="NCBI Taxonomy" id="363253"/>
    <lineage>
        <taxon>Bacteria</taxon>
        <taxon>Pseudomonadati</taxon>
        <taxon>Thermodesulfobacteriota</taxon>
        <taxon>Desulfovibrionia</taxon>
        <taxon>Desulfovibrionales</taxon>
        <taxon>Desulfovibrionaceae</taxon>
        <taxon>Lawsonia</taxon>
    </lineage>
</organism>
<name>RPOC_LAWIP</name>
<protein>
    <recommendedName>
        <fullName evidence="1">DNA-directed RNA polymerase subunit beta'</fullName>
        <shortName evidence="1">RNAP subunit beta'</shortName>
        <ecNumber evidence="1">2.7.7.6</ecNumber>
    </recommendedName>
    <alternativeName>
        <fullName evidence="1">RNA polymerase subunit beta'</fullName>
    </alternativeName>
    <alternativeName>
        <fullName evidence="1">Transcriptase subunit beta'</fullName>
    </alternativeName>
</protein>
<keyword id="KW-0240">DNA-directed RNA polymerase</keyword>
<keyword id="KW-0460">Magnesium</keyword>
<keyword id="KW-0479">Metal-binding</keyword>
<keyword id="KW-0548">Nucleotidyltransferase</keyword>
<keyword id="KW-1185">Reference proteome</keyword>
<keyword id="KW-0804">Transcription</keyword>
<keyword id="KW-0808">Transferase</keyword>
<keyword id="KW-0862">Zinc</keyword>
<proteinExistence type="inferred from homology"/>
<sequence>MSLDELFTVRSTATANATQIRNLKAIQISIASPENIREWSYGEVKKPETINYRTFKPERDGLFCAKIFGPVKDYECNCGKYKRMKHRGIVCEKCGVEVIASKVRRERMGHIELAAPVAHIWFLKTLPSKIGTLLDMAMADLEKVLYFDSYIVLDPGSTNLTKMQVISEDQYLQVIEHINEESFVVGMGAEAIRGLLEELNLETLRNSLREESQSTKSQTKKKKLTKRLKVVEAFIESGNRPEWMIMEVIPVIPPELRPLVPLDGGRFATSDLNDLYRRVINRNNRLKRLMELGAPEIIIRNEKRMLQEAVDALFDNGRRGRAIAGTNGRPLKSLSDMIKGKQGRFRQNLLGKRVDYSGRSVIVVGPKLKLHQCGLPKKMALELFKPFIYSELEKRGHASTIKSAKKIVEREELVVWDILSDVVREYPILLNRAPTLHRLGIQAFEPLLVEGKAIQLHPLVCAAYNADFDGDQMAVHIPLSVEAQVECRVLMMSTNNILSPANGSPVIVPSQDIVLGLYYMTVERSFEKGEGMVFCAPWEVISAIDNNQVNIHAKIKVRMEDGNIYNTTAGRILVWEGLPKGLKFEYVNCVLTKKNIATLVGNAYRDAGIKATVILCDRLKDIGYEYATRAGITIGVKDLIIPATKKTIIDTATSEVDDIERQYRDGIITRTEKYNKVVDVWTKATQDISSEMTKEISTEVVKDPKTERTEVNQSFNPIFMMSNSGARGNQDQMRQLAGMRGLMAKPSGEIIETPITSNFREGLTVLQYFTSTHGARKGLADTALKTANSGYLTRRLVDVVQDVIVYKNDCGTVDGIEVKQVQDGGEIKQNLSERILGRVLLYPIYHPVTNEIIFPENTLIDEYVVKKLEEIGIASVTIRSALTCQSERGVCALCYGRDLARGHLVNIGETVGIIAAQSIGEPGTQLTMRTFHIGGTASREIERSNFEALHSGRIVLTRVKSVENRDGVHLVIGKSGQLSIVDEQGRERERYSLPNGARLYVKEGQEVTKGTFLAEWDPFNEPFVSEVNGFIKFTDLIDGKTYQEKLDEATHQSSMTIIEYRTTSFRPSISICDAEGQTKQRITSTTPAIYSLPAGAIIMVKDGQEVQAGDIIARKPRETSKTRDIVGGLPRVAELFEVRKPKDMAVVSEIAGIVTYAGESKGKRKLIVTPEIGDPKEYLIPKGKHINVSDGDFVEAGDLLTEGHPELHDILKTRGEKYLAAYLVDEIQEVYRFQGVGIDDKHIEVIVRQMLRKITVTNPGGTTFLVGEQVDKGDFKEENQKIVEEGLEPATAEPLVLGITQASLTTSSFISAASFQETTKVLTEASLKGKMDYLRGLKENVIVGRLIPAGTGYREYMELDIVVPEQKERPNKFLEELEERPVLIEIDS</sequence>
<feature type="chain" id="PRO_0000308847" description="DNA-directed RNA polymerase subunit beta'">
    <location>
        <begin position="1"/>
        <end position="1388"/>
    </location>
</feature>
<feature type="binding site" evidence="1">
    <location>
        <position position="76"/>
    </location>
    <ligand>
        <name>Zn(2+)</name>
        <dbReference type="ChEBI" id="CHEBI:29105"/>
        <label>1</label>
    </ligand>
</feature>
<feature type="binding site" evidence="1">
    <location>
        <position position="78"/>
    </location>
    <ligand>
        <name>Zn(2+)</name>
        <dbReference type="ChEBI" id="CHEBI:29105"/>
        <label>1</label>
    </ligand>
</feature>
<feature type="binding site" evidence="1">
    <location>
        <position position="91"/>
    </location>
    <ligand>
        <name>Zn(2+)</name>
        <dbReference type="ChEBI" id="CHEBI:29105"/>
        <label>1</label>
    </ligand>
</feature>
<feature type="binding site" evidence="1">
    <location>
        <position position="94"/>
    </location>
    <ligand>
        <name>Zn(2+)</name>
        <dbReference type="ChEBI" id="CHEBI:29105"/>
        <label>1</label>
    </ligand>
</feature>
<feature type="binding site" evidence="1">
    <location>
        <position position="467"/>
    </location>
    <ligand>
        <name>Mg(2+)</name>
        <dbReference type="ChEBI" id="CHEBI:18420"/>
    </ligand>
</feature>
<feature type="binding site" evidence="1">
    <location>
        <position position="469"/>
    </location>
    <ligand>
        <name>Mg(2+)</name>
        <dbReference type="ChEBI" id="CHEBI:18420"/>
    </ligand>
</feature>
<feature type="binding site" evidence="1">
    <location>
        <position position="471"/>
    </location>
    <ligand>
        <name>Mg(2+)</name>
        <dbReference type="ChEBI" id="CHEBI:18420"/>
    </ligand>
</feature>
<feature type="binding site" evidence="1">
    <location>
        <position position="810"/>
    </location>
    <ligand>
        <name>Zn(2+)</name>
        <dbReference type="ChEBI" id="CHEBI:29105"/>
        <label>2</label>
    </ligand>
</feature>
<feature type="binding site" evidence="1">
    <location>
        <position position="884"/>
    </location>
    <ligand>
        <name>Zn(2+)</name>
        <dbReference type="ChEBI" id="CHEBI:29105"/>
        <label>2</label>
    </ligand>
</feature>
<feature type="binding site" evidence="1">
    <location>
        <position position="891"/>
    </location>
    <ligand>
        <name>Zn(2+)</name>
        <dbReference type="ChEBI" id="CHEBI:29105"/>
        <label>2</label>
    </ligand>
</feature>
<feature type="binding site" evidence="1">
    <location>
        <position position="894"/>
    </location>
    <ligand>
        <name>Zn(2+)</name>
        <dbReference type="ChEBI" id="CHEBI:29105"/>
        <label>2</label>
    </ligand>
</feature>
<evidence type="ECO:0000255" key="1">
    <source>
        <dbReference type="HAMAP-Rule" id="MF_01322"/>
    </source>
</evidence>
<dbReference type="EC" id="2.7.7.6" evidence="1"/>
<dbReference type="EMBL" id="AM180252">
    <property type="protein sequence ID" value="CAJ54958.1"/>
    <property type="molecule type" value="Genomic_DNA"/>
</dbReference>
<dbReference type="RefSeq" id="WP_011526987.1">
    <property type="nucleotide sequence ID" value="NC_008011.1"/>
</dbReference>
<dbReference type="SMR" id="Q1MPW9"/>
<dbReference type="STRING" id="363253.LI0904"/>
<dbReference type="KEGG" id="lip:LI0904"/>
<dbReference type="eggNOG" id="COG0086">
    <property type="taxonomic scope" value="Bacteria"/>
</dbReference>
<dbReference type="HOGENOM" id="CLU_000524_3_1_7"/>
<dbReference type="OrthoDB" id="9815296at2"/>
<dbReference type="Proteomes" id="UP000002430">
    <property type="component" value="Chromosome"/>
</dbReference>
<dbReference type="GO" id="GO:0000428">
    <property type="term" value="C:DNA-directed RNA polymerase complex"/>
    <property type="evidence" value="ECO:0007669"/>
    <property type="project" value="UniProtKB-KW"/>
</dbReference>
<dbReference type="GO" id="GO:0003677">
    <property type="term" value="F:DNA binding"/>
    <property type="evidence" value="ECO:0007669"/>
    <property type="project" value="UniProtKB-UniRule"/>
</dbReference>
<dbReference type="GO" id="GO:0003899">
    <property type="term" value="F:DNA-directed RNA polymerase activity"/>
    <property type="evidence" value="ECO:0007669"/>
    <property type="project" value="UniProtKB-UniRule"/>
</dbReference>
<dbReference type="GO" id="GO:0000287">
    <property type="term" value="F:magnesium ion binding"/>
    <property type="evidence" value="ECO:0007669"/>
    <property type="project" value="UniProtKB-UniRule"/>
</dbReference>
<dbReference type="GO" id="GO:0008270">
    <property type="term" value="F:zinc ion binding"/>
    <property type="evidence" value="ECO:0007669"/>
    <property type="project" value="UniProtKB-UniRule"/>
</dbReference>
<dbReference type="GO" id="GO:0006351">
    <property type="term" value="P:DNA-templated transcription"/>
    <property type="evidence" value="ECO:0007669"/>
    <property type="project" value="UniProtKB-UniRule"/>
</dbReference>
<dbReference type="CDD" id="cd02655">
    <property type="entry name" value="RNAP_beta'_C"/>
    <property type="match status" value="1"/>
</dbReference>
<dbReference type="CDD" id="cd01609">
    <property type="entry name" value="RNAP_beta'_N"/>
    <property type="match status" value="1"/>
</dbReference>
<dbReference type="FunFam" id="1.10.132.30:FF:000003">
    <property type="entry name" value="DNA-directed RNA polymerase subunit beta"/>
    <property type="match status" value="1"/>
</dbReference>
<dbReference type="Gene3D" id="1.10.132.30">
    <property type="match status" value="1"/>
</dbReference>
<dbReference type="Gene3D" id="1.10.150.390">
    <property type="match status" value="1"/>
</dbReference>
<dbReference type="Gene3D" id="1.10.1790.20">
    <property type="match status" value="1"/>
</dbReference>
<dbReference type="Gene3D" id="1.10.40.90">
    <property type="match status" value="1"/>
</dbReference>
<dbReference type="Gene3D" id="2.40.40.20">
    <property type="match status" value="1"/>
</dbReference>
<dbReference type="Gene3D" id="2.40.50.100">
    <property type="match status" value="3"/>
</dbReference>
<dbReference type="Gene3D" id="4.10.860.120">
    <property type="entry name" value="RNA polymerase II, clamp domain"/>
    <property type="match status" value="1"/>
</dbReference>
<dbReference type="Gene3D" id="1.10.274.100">
    <property type="entry name" value="RNA polymerase Rpb1, domain 3"/>
    <property type="match status" value="2"/>
</dbReference>
<dbReference type="HAMAP" id="MF_01322">
    <property type="entry name" value="RNApol_bact_RpoC"/>
    <property type="match status" value="1"/>
</dbReference>
<dbReference type="InterPro" id="IPR045867">
    <property type="entry name" value="DNA-dir_RpoC_beta_prime"/>
</dbReference>
<dbReference type="InterPro" id="IPR012754">
    <property type="entry name" value="DNA-dir_RpoC_beta_prime_bact"/>
</dbReference>
<dbReference type="InterPro" id="IPR000722">
    <property type="entry name" value="RNA_pol_asu"/>
</dbReference>
<dbReference type="InterPro" id="IPR006592">
    <property type="entry name" value="RNA_pol_N"/>
</dbReference>
<dbReference type="InterPro" id="IPR007080">
    <property type="entry name" value="RNA_pol_Rpb1_1"/>
</dbReference>
<dbReference type="InterPro" id="IPR007066">
    <property type="entry name" value="RNA_pol_Rpb1_3"/>
</dbReference>
<dbReference type="InterPro" id="IPR042102">
    <property type="entry name" value="RNA_pol_Rpb1_3_sf"/>
</dbReference>
<dbReference type="InterPro" id="IPR007083">
    <property type="entry name" value="RNA_pol_Rpb1_4"/>
</dbReference>
<dbReference type="InterPro" id="IPR007081">
    <property type="entry name" value="RNA_pol_Rpb1_5"/>
</dbReference>
<dbReference type="InterPro" id="IPR044893">
    <property type="entry name" value="RNA_pol_Rpb1_clamp_domain"/>
</dbReference>
<dbReference type="InterPro" id="IPR038120">
    <property type="entry name" value="Rpb1_funnel_sf"/>
</dbReference>
<dbReference type="NCBIfam" id="TIGR02386">
    <property type="entry name" value="rpoC_TIGR"/>
    <property type="match status" value="1"/>
</dbReference>
<dbReference type="PANTHER" id="PTHR19376">
    <property type="entry name" value="DNA-DIRECTED RNA POLYMERASE"/>
    <property type="match status" value="1"/>
</dbReference>
<dbReference type="PANTHER" id="PTHR19376:SF54">
    <property type="entry name" value="DNA-DIRECTED RNA POLYMERASE SUBUNIT BETA"/>
    <property type="match status" value="1"/>
</dbReference>
<dbReference type="Pfam" id="PF04997">
    <property type="entry name" value="RNA_pol_Rpb1_1"/>
    <property type="match status" value="1"/>
</dbReference>
<dbReference type="Pfam" id="PF00623">
    <property type="entry name" value="RNA_pol_Rpb1_2"/>
    <property type="match status" value="1"/>
</dbReference>
<dbReference type="Pfam" id="PF04983">
    <property type="entry name" value="RNA_pol_Rpb1_3"/>
    <property type="match status" value="1"/>
</dbReference>
<dbReference type="Pfam" id="PF05000">
    <property type="entry name" value="RNA_pol_Rpb1_4"/>
    <property type="match status" value="1"/>
</dbReference>
<dbReference type="Pfam" id="PF04998">
    <property type="entry name" value="RNA_pol_Rpb1_5"/>
    <property type="match status" value="1"/>
</dbReference>
<dbReference type="SMART" id="SM00663">
    <property type="entry name" value="RPOLA_N"/>
    <property type="match status" value="1"/>
</dbReference>
<dbReference type="SUPFAM" id="SSF64484">
    <property type="entry name" value="beta and beta-prime subunits of DNA dependent RNA-polymerase"/>
    <property type="match status" value="1"/>
</dbReference>
<gene>
    <name evidence="1" type="primary">rpoC</name>
    <name type="ordered locus">LI0904</name>
</gene>
<comment type="function">
    <text evidence="1">DNA-dependent RNA polymerase catalyzes the transcription of DNA into RNA using the four ribonucleoside triphosphates as substrates.</text>
</comment>
<comment type="catalytic activity">
    <reaction evidence="1">
        <text>RNA(n) + a ribonucleoside 5'-triphosphate = RNA(n+1) + diphosphate</text>
        <dbReference type="Rhea" id="RHEA:21248"/>
        <dbReference type="Rhea" id="RHEA-COMP:14527"/>
        <dbReference type="Rhea" id="RHEA-COMP:17342"/>
        <dbReference type="ChEBI" id="CHEBI:33019"/>
        <dbReference type="ChEBI" id="CHEBI:61557"/>
        <dbReference type="ChEBI" id="CHEBI:140395"/>
        <dbReference type="EC" id="2.7.7.6"/>
    </reaction>
</comment>
<comment type="cofactor">
    <cofactor evidence="1">
        <name>Mg(2+)</name>
        <dbReference type="ChEBI" id="CHEBI:18420"/>
    </cofactor>
    <text evidence="1">Binds 1 Mg(2+) ion per subunit.</text>
</comment>
<comment type="cofactor">
    <cofactor evidence="1">
        <name>Zn(2+)</name>
        <dbReference type="ChEBI" id="CHEBI:29105"/>
    </cofactor>
    <text evidence="1">Binds 2 Zn(2+) ions per subunit.</text>
</comment>
<comment type="subunit">
    <text evidence="1">The RNAP catalytic core consists of 2 alpha, 1 beta, 1 beta' and 1 omega subunit. When a sigma factor is associated with the core the holoenzyme is formed, which can initiate transcription.</text>
</comment>
<comment type="similarity">
    <text evidence="1">Belongs to the RNA polymerase beta' chain family.</text>
</comment>